<accession>P48964</accession>
<accession>E9PVD0</accession>
<comment type="function">
    <text evidence="1">Tyrosine protein phosphatase which functions as a dosage-dependent inducer of mitotic progression. Directly dephosphorylates CDK1 and stimulates its kinase activity. Also dephosphorylates CDK2 in complex with cyclin-E, in vitro.</text>
</comment>
<comment type="catalytic activity">
    <reaction evidence="1">
        <text>O-phospho-L-tyrosyl-[protein] + H2O = L-tyrosyl-[protein] + phosphate</text>
        <dbReference type="Rhea" id="RHEA:10684"/>
        <dbReference type="Rhea" id="RHEA-COMP:10136"/>
        <dbReference type="Rhea" id="RHEA-COMP:20101"/>
        <dbReference type="ChEBI" id="CHEBI:15377"/>
        <dbReference type="ChEBI" id="CHEBI:43474"/>
        <dbReference type="ChEBI" id="CHEBI:46858"/>
        <dbReference type="ChEBI" id="CHEBI:61978"/>
        <dbReference type="EC" id="3.1.3.48"/>
    </reaction>
    <physiologicalReaction direction="left-to-right" evidence="1">
        <dbReference type="Rhea" id="RHEA:10685"/>
    </physiologicalReaction>
</comment>
<comment type="activity regulation">
    <text evidence="1">Stimulated by B-type cyclins. Stimulated by PIM1-mediated phosphorylation (By similarity).</text>
</comment>
<comment type="subunit">
    <text evidence="1">Interacts with CCNB1/cyclin B1. Interacts with YWHAE/14-3-3 epsilon when phosphorylated. Interacts with CUL1 specifically when CUL1 is neddylated and active. Interacts with BTRC/BTRCP1 and FBXW11/BTRCP2. Interactions with CUL1, BTRC and FBXW11 are enhanced upon DNA damage. Interacts with CHEK2; mediates CDC25A phosphorylation and degradation in response to infrared-induced DNA damages (By similarity). Interacts with HSP90AB1; prevents heat shock-mediated CDC25A degradation and contributes to cell cycle progression (By similarity).</text>
</comment>
<comment type="tissue specificity">
    <text evidence="4">Ubiquitously expressed in most developing tissue. High levels in the testis and lower levels in the ovary, particularly in germ cells. Lower levels also in kidney, liver, heart and muscle.</text>
</comment>
<comment type="developmental stage">
    <text evidence="4">First detected at the blastocyst stage.</text>
</comment>
<comment type="domain">
    <text evidence="1">The phosphodegron motif mediates interaction with specific F-box proteins when phosphorylated. Putative phosphorylation sites at Ser-78 and Ser-81 appear to be essential for this interaction (By similarity).</text>
</comment>
<comment type="PTM">
    <text evidence="1">Phosphorylated by CHEK1 on Ser-75, Ser-123, Ser-172, Ser-271, Ser-284 and Thr-497 during checkpoint mediated cell cycle arrest. Also phosphorylated by CHEK2 on Ser-123, Ser-271, and Ser-284 during checkpoint mediated cell cycle arrest. Phosphorylation on Ser-172 and Thr-497 creates binding sites for YWHAE/14-3-3 epsilon which inhibits CDC25A. Phosphorylation on Ser-75, Ser-123, Ser-172, Ser-271 and Ser-284 may also promote ubiquitin-dependent proteolysis of CDC25A by the SCF complex. Phosphorylation of CDC25A at Ser-75 by CHEK1 primes it for subsequent phosphorylation at Ser-75, Ser-81 and Ser-87 by NEK11. Phosphorylation by NEK11 is required for BTRC-mediated polyubiquitination and degradation. Phosphorylation by PIM1 leads to an increase in phosphatase activity. Phosphorylated by PLK3 following DNA damage, leading to promote its ubiquitination and degradation (By similarity).</text>
</comment>
<comment type="PTM">
    <text evidence="1">Ubiquitinated by the anaphase promoting complex/cyclosome (APC/C) ubiquitin ligase complex that contains FZR1/CDH1 during G1 phase leading to its degradation by the proteasome. Ubiquitinated by a SCF complex containing BTRC and FBXW11 during S phase leading to its degradation by the proteasome. Deubiquitination by USP17L2/DUB3 leads to its stabilization (By similarity).</text>
</comment>
<comment type="similarity">
    <text evidence="5">Belongs to the MPI phosphatase family.</text>
</comment>
<dbReference type="EC" id="3.1.3.48" evidence="1"/>
<dbReference type="EMBL" id="U27323">
    <property type="protein sequence ID" value="AAA85580.1"/>
    <property type="molecule type" value="mRNA"/>
</dbReference>
<dbReference type="EMBL" id="CT573087">
    <property type="status" value="NOT_ANNOTATED_CDS"/>
    <property type="molecule type" value="Genomic_DNA"/>
</dbReference>
<dbReference type="CCDS" id="CCDS23559.1"/>
<dbReference type="RefSeq" id="NP_031684.3">
    <property type="nucleotide sequence ID" value="NM_007658.4"/>
</dbReference>
<dbReference type="SMR" id="P48964"/>
<dbReference type="FunCoup" id="P48964">
    <property type="interactions" value="2732"/>
</dbReference>
<dbReference type="STRING" id="10090.ENSMUSP00000091882"/>
<dbReference type="GlyGen" id="P48964">
    <property type="glycosylation" value="2 sites"/>
</dbReference>
<dbReference type="iPTMnet" id="P48964"/>
<dbReference type="PhosphoSitePlus" id="P48964"/>
<dbReference type="jPOST" id="P48964"/>
<dbReference type="PaxDb" id="10090-ENSMUSP00000091882"/>
<dbReference type="ProteomicsDB" id="295583"/>
<dbReference type="Antibodypedia" id="1619">
    <property type="antibodies" value="1697 antibodies from 47 providers"/>
</dbReference>
<dbReference type="DNASU" id="12530"/>
<dbReference type="Ensembl" id="ENSMUST00000094324.8">
    <property type="protein sequence ID" value="ENSMUSP00000091882.4"/>
    <property type="gene ID" value="ENSMUSG00000032477.15"/>
</dbReference>
<dbReference type="GeneID" id="12530"/>
<dbReference type="KEGG" id="mmu:12530"/>
<dbReference type="UCSC" id="uc009rsw.1">
    <property type="organism name" value="mouse"/>
</dbReference>
<dbReference type="AGR" id="MGI:103198"/>
<dbReference type="CTD" id="993"/>
<dbReference type="MGI" id="MGI:103198">
    <property type="gene designation" value="Cdc25a"/>
</dbReference>
<dbReference type="VEuPathDB" id="HostDB:ENSMUSG00000032477"/>
<dbReference type="eggNOG" id="KOG3772">
    <property type="taxonomic scope" value="Eukaryota"/>
</dbReference>
<dbReference type="GeneTree" id="ENSGT00940000160737"/>
<dbReference type="HOGENOM" id="CLU_014464_0_1_1"/>
<dbReference type="InParanoid" id="P48964"/>
<dbReference type="OMA" id="GTKNGLH"/>
<dbReference type="OrthoDB" id="26523at2759"/>
<dbReference type="PhylomeDB" id="P48964"/>
<dbReference type="TreeFam" id="TF101056"/>
<dbReference type="Reactome" id="R-MMU-176187">
    <property type="pathway name" value="Activation of ATR in response to replication stress"/>
</dbReference>
<dbReference type="Reactome" id="R-MMU-5689880">
    <property type="pathway name" value="Ub-specific processing proteases"/>
</dbReference>
<dbReference type="Reactome" id="R-MMU-69202">
    <property type="pathway name" value="Cyclin E associated events during G1/S transition"/>
</dbReference>
<dbReference type="Reactome" id="R-MMU-69273">
    <property type="pathway name" value="Cyclin A/B1/B2 associated events during G2/M transition"/>
</dbReference>
<dbReference type="Reactome" id="R-MMU-69601">
    <property type="pathway name" value="Ubiquitin Mediated Degradation of Phosphorylated Cdc25A"/>
</dbReference>
<dbReference type="Reactome" id="R-MMU-69656">
    <property type="pathway name" value="Cyclin A:Cdk2-associated events at S phase entry"/>
</dbReference>
<dbReference type="BioGRID-ORCS" id="12530">
    <property type="hits" value="5 hits in 80 CRISPR screens"/>
</dbReference>
<dbReference type="CD-CODE" id="01CA17F3">
    <property type="entry name" value="Centrosome"/>
</dbReference>
<dbReference type="ChiTaRS" id="Cdc25a">
    <property type="organism name" value="mouse"/>
</dbReference>
<dbReference type="PRO" id="PR:P48964"/>
<dbReference type="Proteomes" id="UP000000589">
    <property type="component" value="Chromosome 9"/>
</dbReference>
<dbReference type="RNAct" id="P48964">
    <property type="molecule type" value="protein"/>
</dbReference>
<dbReference type="Bgee" id="ENSMUSG00000032477">
    <property type="expression patterns" value="Expressed in otic placode and 236 other cell types or tissues"/>
</dbReference>
<dbReference type="ExpressionAtlas" id="P48964">
    <property type="expression patterns" value="baseline and differential"/>
</dbReference>
<dbReference type="GO" id="GO:0005737">
    <property type="term" value="C:cytoplasm"/>
    <property type="evidence" value="ECO:0000314"/>
    <property type="project" value="MGI"/>
</dbReference>
<dbReference type="GO" id="GO:0005634">
    <property type="term" value="C:nucleus"/>
    <property type="evidence" value="ECO:0000314"/>
    <property type="project" value="MGI"/>
</dbReference>
<dbReference type="GO" id="GO:0004721">
    <property type="term" value="F:phosphoprotein phosphatase activity"/>
    <property type="evidence" value="ECO:0000250"/>
    <property type="project" value="UniProtKB"/>
</dbReference>
<dbReference type="GO" id="GO:0019901">
    <property type="term" value="F:protein kinase binding"/>
    <property type="evidence" value="ECO:0007669"/>
    <property type="project" value="Ensembl"/>
</dbReference>
<dbReference type="GO" id="GO:0004725">
    <property type="term" value="F:protein tyrosine phosphatase activity"/>
    <property type="evidence" value="ECO:0007669"/>
    <property type="project" value="UniProtKB-EC"/>
</dbReference>
<dbReference type="GO" id="GO:0051087">
    <property type="term" value="F:protein-folding chaperone binding"/>
    <property type="evidence" value="ECO:0007669"/>
    <property type="project" value="Ensembl"/>
</dbReference>
<dbReference type="GO" id="GO:0051301">
    <property type="term" value="P:cell division"/>
    <property type="evidence" value="ECO:0007669"/>
    <property type="project" value="UniProtKB-KW"/>
</dbReference>
<dbReference type="GO" id="GO:0000086">
    <property type="term" value="P:G2/M transition of mitotic cell cycle"/>
    <property type="evidence" value="ECO:0007669"/>
    <property type="project" value="Ensembl"/>
</dbReference>
<dbReference type="GO" id="GO:0010971">
    <property type="term" value="P:positive regulation of G2/M transition of mitotic cell cycle"/>
    <property type="evidence" value="ECO:0000250"/>
    <property type="project" value="UniProtKB"/>
</dbReference>
<dbReference type="GO" id="GO:0009314">
    <property type="term" value="P:response to radiation"/>
    <property type="evidence" value="ECO:0000250"/>
    <property type="project" value="UniProtKB"/>
</dbReference>
<dbReference type="CDD" id="cd01530">
    <property type="entry name" value="Cdc25"/>
    <property type="match status" value="1"/>
</dbReference>
<dbReference type="FunFam" id="3.40.250.10:FF:000004">
    <property type="entry name" value="M-phase inducer phosphatase 1 isoform X1"/>
    <property type="match status" value="1"/>
</dbReference>
<dbReference type="Gene3D" id="3.40.250.10">
    <property type="entry name" value="Rhodanese-like domain"/>
    <property type="match status" value="1"/>
</dbReference>
<dbReference type="InterPro" id="IPR000751">
    <property type="entry name" value="MPI_Phosphatase"/>
</dbReference>
<dbReference type="InterPro" id="IPR001763">
    <property type="entry name" value="Rhodanese-like_dom"/>
</dbReference>
<dbReference type="InterPro" id="IPR036873">
    <property type="entry name" value="Rhodanese-like_dom_sf"/>
</dbReference>
<dbReference type="PANTHER" id="PTHR10828:SF46">
    <property type="entry name" value="M-PHASE INDUCER PHOSPHATASE 1"/>
    <property type="match status" value="1"/>
</dbReference>
<dbReference type="PANTHER" id="PTHR10828">
    <property type="entry name" value="M-PHASE INDUCER PHOSPHATASE DUAL SPECIFICITY PHOSPHATASE CDC25"/>
    <property type="match status" value="1"/>
</dbReference>
<dbReference type="Pfam" id="PF06617">
    <property type="entry name" value="M-inducer_phosp"/>
    <property type="match status" value="1"/>
</dbReference>
<dbReference type="Pfam" id="PF00581">
    <property type="entry name" value="Rhodanese"/>
    <property type="match status" value="1"/>
</dbReference>
<dbReference type="PRINTS" id="PR00716">
    <property type="entry name" value="MPIPHPHTASE"/>
</dbReference>
<dbReference type="SMART" id="SM00450">
    <property type="entry name" value="RHOD"/>
    <property type="match status" value="1"/>
</dbReference>
<dbReference type="SUPFAM" id="SSF52821">
    <property type="entry name" value="Rhodanese/Cell cycle control phosphatase"/>
    <property type="match status" value="1"/>
</dbReference>
<dbReference type="PROSITE" id="PS50206">
    <property type="entry name" value="RHODANESE_3"/>
    <property type="match status" value="1"/>
</dbReference>
<reference key="1">
    <citation type="journal article" date="1995" name="Development">
        <title>Two CDC25 homologues are differentially expressed during mouse development.</title>
        <authorList>
            <person name="Wickramasinghe D."/>
            <person name="Becker S."/>
            <person name="Ernst M.K."/>
            <person name="Resnick J.L."/>
            <person name="Centanni J.M."/>
            <person name="Tessarollo L."/>
            <person name="Grabel L.B."/>
            <person name="Donovan P.J."/>
        </authorList>
    </citation>
    <scope>NUCLEOTIDE SEQUENCE [MRNA]</scope>
    <scope>TISSUE SPECIFICITY</scope>
    <scope>DEVELOPMENTAL STAGE</scope>
</reference>
<reference key="2">
    <citation type="journal article" date="2009" name="PLoS Biol.">
        <title>Lineage-specific biology revealed by a finished genome assembly of the mouse.</title>
        <authorList>
            <person name="Church D.M."/>
            <person name="Goodstadt L."/>
            <person name="Hillier L.W."/>
            <person name="Zody M.C."/>
            <person name="Goldstein S."/>
            <person name="She X."/>
            <person name="Bult C.J."/>
            <person name="Agarwala R."/>
            <person name="Cherry J.L."/>
            <person name="DiCuccio M."/>
            <person name="Hlavina W."/>
            <person name="Kapustin Y."/>
            <person name="Meric P."/>
            <person name="Maglott D."/>
            <person name="Birtle Z."/>
            <person name="Marques A.C."/>
            <person name="Graves T."/>
            <person name="Zhou S."/>
            <person name="Teague B."/>
            <person name="Potamousis K."/>
            <person name="Churas C."/>
            <person name="Place M."/>
            <person name="Herschleb J."/>
            <person name="Runnheim R."/>
            <person name="Forrest D."/>
            <person name="Amos-Landgraf J."/>
            <person name="Schwartz D.C."/>
            <person name="Cheng Z."/>
            <person name="Lindblad-Toh K."/>
            <person name="Eichler E.E."/>
            <person name="Ponting C.P."/>
        </authorList>
    </citation>
    <scope>NUCLEOTIDE SEQUENCE [LARGE SCALE GENOMIC DNA]</scope>
    <source>
        <strain>C57BL/6J</strain>
    </source>
</reference>
<proteinExistence type="evidence at transcript level"/>
<organism>
    <name type="scientific">Mus musculus</name>
    <name type="common">Mouse</name>
    <dbReference type="NCBI Taxonomy" id="10090"/>
    <lineage>
        <taxon>Eukaryota</taxon>
        <taxon>Metazoa</taxon>
        <taxon>Chordata</taxon>
        <taxon>Craniata</taxon>
        <taxon>Vertebrata</taxon>
        <taxon>Euteleostomi</taxon>
        <taxon>Mammalia</taxon>
        <taxon>Eutheria</taxon>
        <taxon>Euarchontoglires</taxon>
        <taxon>Glires</taxon>
        <taxon>Rodentia</taxon>
        <taxon>Myomorpha</taxon>
        <taxon>Muroidea</taxon>
        <taxon>Muridae</taxon>
        <taxon>Murinae</taxon>
        <taxon>Mus</taxon>
        <taxon>Mus</taxon>
    </lineage>
</organism>
<name>MPIP1_MOUSE</name>
<gene>
    <name type="primary">Cdc25a</name>
    <name type="synonym">Cdc25m3</name>
</gene>
<sequence>MELGPEPPHRRRLFFACSPTPAPQPTGKMLFGASAAGGLSPVTNLTVTMDQLEGLGSDCEKMEVRNNSSLQRMGSSESTDSGFCLDSPGPLDSKENLEISLTRINSLPQKLLGCSPALKRSHSDSLDHDTFHLIDQDENKENEAFEFKKPIRPASRHIYEESKDPFTHRQNSAPARMLSSNESESGNFSPLFIPQSPVKATLSDEDDGFIDLLDGENMKNDEETPSCMASLWTAPLVMRRPANLADRCGLFDSPSPCGSSTRAVLKRADRSHEEPPRGTKRRKSVPSPVKAKADVPEPAQLPSQSLSLMSSPKGTIENILDSDPRDLIGDFSKGYLFNTVSGKHQDLKYISPEIMASVLNGKFAGLIKEFVIIDCRYPYEYEGGHIKGAVNLHMEEEVEDFLLKNPIVPTDGKRVIVVFHCEFSSERGPRMCRYVRERDRLGNEYPKLHYPELYVLKGGYKEFFLKCQSHCEPPSYRPMHHEDFKEDLKKFRTKSRTWAGEKSKREMYSRLKKL</sequence>
<evidence type="ECO:0000250" key="1">
    <source>
        <dbReference type="UniProtKB" id="P30304"/>
    </source>
</evidence>
<evidence type="ECO:0000255" key="2">
    <source>
        <dbReference type="PROSITE-ProRule" id="PRU00173"/>
    </source>
</evidence>
<evidence type="ECO:0000256" key="3">
    <source>
        <dbReference type="SAM" id="MobiDB-lite"/>
    </source>
</evidence>
<evidence type="ECO:0000269" key="4">
    <source>
    </source>
</evidence>
<evidence type="ECO:0000305" key="5"/>
<feature type="chain" id="PRO_0000198642" description="M-phase inducer phosphatase 1">
    <location>
        <begin position="1"/>
        <end position="514"/>
    </location>
</feature>
<feature type="domain" description="Rhodanese" evidence="2">
    <location>
        <begin position="366"/>
        <end position="472"/>
    </location>
</feature>
<feature type="region of interest" description="Disordered" evidence="3">
    <location>
        <begin position="256"/>
        <end position="308"/>
    </location>
</feature>
<feature type="short sequence motif" description="Phosphodegron">
    <location>
        <begin position="73"/>
        <end position="83"/>
    </location>
</feature>
<feature type="short sequence motif" description="KEN box">
    <location>
        <begin position="140"/>
        <end position="142"/>
    </location>
</feature>
<feature type="compositionally biased region" description="Basic and acidic residues" evidence="3">
    <location>
        <begin position="266"/>
        <end position="277"/>
    </location>
</feature>
<feature type="active site" evidence="1">
    <location>
        <position position="421"/>
    </location>
</feature>
<feature type="modified residue" description="Phosphoserine; by CHEK1" evidence="1">
    <location>
        <position position="75"/>
    </location>
</feature>
<feature type="modified residue" description="Phosphoserine; by NEK11" evidence="1">
    <location>
        <position position="78"/>
    </location>
</feature>
<feature type="modified residue" description="Phosphoserine; by NEK11" evidence="1">
    <location>
        <position position="81"/>
    </location>
</feature>
<feature type="modified residue" description="Phosphoserine; by NEK11" evidence="1">
    <location>
        <position position="87"/>
    </location>
</feature>
<feature type="modified residue" description="Phosphoserine" evidence="1">
    <location>
        <position position="106"/>
    </location>
</feature>
<feature type="modified residue" description="Phosphoserine; by CHEK1 and CHEK2" evidence="1">
    <location>
        <position position="123"/>
    </location>
</feature>
<feature type="modified residue" description="Phosphoserine; by CHEK1" evidence="1">
    <location>
        <position position="172"/>
    </location>
</feature>
<feature type="modified residue" description="Phosphoserine; by CHEK1 and CHEK2" evidence="1">
    <location>
        <position position="271"/>
    </location>
</feature>
<feature type="modified residue" description="Phosphoserine; by CHEK1 and CHEK2" evidence="1">
    <location>
        <position position="284"/>
    </location>
</feature>
<feature type="modified residue" description="Phosphoserine" evidence="1">
    <location>
        <position position="311"/>
    </location>
</feature>
<feature type="modified residue" description="Phosphothreonine; by CHEK1" evidence="1">
    <location>
        <position position="497"/>
    </location>
</feature>
<feature type="modified residue" description="Phosphoserine; by PLK3" evidence="1">
    <location>
        <position position="503"/>
    </location>
</feature>
<feature type="modified residue" description="Phosphoserine; by PLK3" evidence="1">
    <location>
        <position position="509"/>
    </location>
</feature>
<feature type="sequence conflict" description="In Ref. 1; AAA85580." evidence="5" ref="1">
    <original>E</original>
    <variation>S</variation>
    <location>
        <position position="6"/>
    </location>
</feature>
<feature type="sequence conflict" description="In Ref. 1; AAA85580." evidence="5" ref="1">
    <original>HR</original>
    <variation>P</variation>
    <location>
        <begin position="9"/>
        <end position="10"/>
    </location>
</feature>
<feature type="sequence conflict" description="In Ref. 1; AAA85580." evidence="5" ref="1">
    <original>P</original>
    <variation>S</variation>
    <location>
        <position position="23"/>
    </location>
</feature>
<feature type="sequence conflict" description="In Ref. 1; AAA85580." evidence="5" ref="1">
    <original>H</original>
    <variation>Q</variation>
    <location>
        <position position="128"/>
    </location>
</feature>
<feature type="sequence conflict" description="In Ref. 1; AAA85580." evidence="5" ref="1">
    <original>E</original>
    <variation>K</variation>
    <location>
        <position position="138"/>
    </location>
</feature>
<feature type="sequence conflict" description="In Ref. 1; AAA85580." evidence="5" ref="1">
    <original>FKKPIRPASRHIYE</original>
    <variation>PKKQYDLHLSSHLQ</variation>
    <location>
        <begin position="147"/>
        <end position="160"/>
    </location>
</feature>
<feature type="sequence conflict" description="In Ref. 1; AAA85580." evidence="5" ref="1">
    <original>PFTH</original>
    <variation>LYTQ</variation>
    <location>
        <begin position="165"/>
        <end position="168"/>
    </location>
</feature>
<feature type="sequence conflict" description="In Ref. 1; AAA85580." evidence="5" ref="1">
    <original>PAR</original>
    <variation>QLG</variation>
    <location>
        <begin position="174"/>
        <end position="176"/>
    </location>
</feature>
<feature type="sequence conflict" description="In Ref. 1; AAA85580." evidence="5" ref="1">
    <original>I</original>
    <variation>T</variation>
    <location>
        <position position="193"/>
    </location>
</feature>
<feature type="sequence conflict" description="In Ref. 1; AAA85580." evidence="5" ref="1">
    <original>M</original>
    <variation>L</variation>
    <location>
        <position position="218"/>
    </location>
</feature>
<feature type="sequence conflict" description="In Ref. 1; AAA85580." evidence="5" ref="1">
    <original>SCMA</original>
    <variation>TSMV</variation>
    <location>
        <begin position="226"/>
        <end position="229"/>
    </location>
</feature>
<feature type="sequence conflict" description="In Ref. 1; AAA85580." evidence="5" ref="1">
    <original>C</original>
    <variation>LR</variation>
    <location>
        <position position="248"/>
    </location>
</feature>
<feature type="sequence conflict" description="In Ref. 1; AAA85580." evidence="5" ref="1">
    <original>G</original>
    <variation>S</variation>
    <location>
        <position position="365"/>
    </location>
</feature>
<feature type="sequence conflict" description="In Ref. 1; AAA85580." evidence="5" ref="1">
    <original>S</original>
    <variation>R</variation>
    <location>
        <position position="503"/>
    </location>
</feature>
<protein>
    <recommendedName>
        <fullName>M-phase inducer phosphatase 1</fullName>
        <ecNumber evidence="1">3.1.3.48</ecNumber>
    </recommendedName>
    <alternativeName>
        <fullName>Dual specificity phosphatase Cdc25A</fullName>
    </alternativeName>
</protein>
<keyword id="KW-0131">Cell cycle</keyword>
<keyword id="KW-0132">Cell division</keyword>
<keyword id="KW-0378">Hydrolase</keyword>
<keyword id="KW-0498">Mitosis</keyword>
<keyword id="KW-0597">Phosphoprotein</keyword>
<keyword id="KW-0904">Protein phosphatase</keyword>
<keyword id="KW-1185">Reference proteome</keyword>
<keyword id="KW-0832">Ubl conjugation</keyword>